<keyword id="KW-0963">Cytoplasm</keyword>
<keyword id="KW-0342">GTP-binding</keyword>
<keyword id="KW-0436">Ligase</keyword>
<keyword id="KW-0460">Magnesium</keyword>
<keyword id="KW-0479">Metal-binding</keyword>
<keyword id="KW-0547">Nucleotide-binding</keyword>
<keyword id="KW-0658">Purine biosynthesis</keyword>
<evidence type="ECO:0000255" key="1">
    <source>
        <dbReference type="HAMAP-Rule" id="MF_00011"/>
    </source>
</evidence>
<comment type="function">
    <text evidence="1">Plays an important role in the de novo pathway of purine nucleotide biosynthesis. Catalyzes the first committed step in the biosynthesis of AMP from IMP.</text>
</comment>
<comment type="catalytic activity">
    <reaction evidence="1">
        <text>IMP + L-aspartate + GTP = N(6)-(1,2-dicarboxyethyl)-AMP + GDP + phosphate + 2 H(+)</text>
        <dbReference type="Rhea" id="RHEA:15753"/>
        <dbReference type="ChEBI" id="CHEBI:15378"/>
        <dbReference type="ChEBI" id="CHEBI:29991"/>
        <dbReference type="ChEBI" id="CHEBI:37565"/>
        <dbReference type="ChEBI" id="CHEBI:43474"/>
        <dbReference type="ChEBI" id="CHEBI:57567"/>
        <dbReference type="ChEBI" id="CHEBI:58053"/>
        <dbReference type="ChEBI" id="CHEBI:58189"/>
        <dbReference type="EC" id="6.3.4.4"/>
    </reaction>
</comment>
<comment type="cofactor">
    <cofactor evidence="1">
        <name>Mg(2+)</name>
        <dbReference type="ChEBI" id="CHEBI:18420"/>
    </cofactor>
    <text evidence="1">Binds 1 Mg(2+) ion per subunit.</text>
</comment>
<comment type="pathway">
    <text evidence="1">Purine metabolism; AMP biosynthesis via de novo pathway; AMP from IMP: step 1/2.</text>
</comment>
<comment type="subunit">
    <text evidence="1">Homodimer.</text>
</comment>
<comment type="subcellular location">
    <subcellularLocation>
        <location evidence="1">Cytoplasm</location>
    </subcellularLocation>
</comment>
<comment type="similarity">
    <text evidence="1">Belongs to the adenylosuccinate synthetase family.</text>
</comment>
<sequence>MGNNVVVLGTQWGDEGKGKIVDLLTEDAKYVVRYQGGHNAGHTLVIDGQKTVLHLIPSGILRNNVKCIIGNGVVLSPEALIKEMSGLEDRGVPVRERLFISEACPLILPYHVALDQAREAARGKKAIGTTGRGIGPAYEDKVARRGLRVGDLFDMASFAEKLQEVMAFHNFQLEHFYKVEPVSYEAVLEQAKGYAELLTSMVIDVTNELDAARKRGDKIMFEGAQGTLLDIDHGTYPYVTSSNTTAGGVAAGSGFGPRHLGYILGIAKAYCTRVGAGPFPTELFDEVGDHLGTKGHEFGATTGRKRRCGWFDAVAMRRAIQINSVTGFCLTKLDVLDGLKEIKICTGYQMPDGSIAEVSPMAADAFENVTPIFETMPGWSETTFGAKTLAELPQTALDYIKRIEELTGVPVDIISTGPDRNETIIKVHPFSA</sequence>
<dbReference type="EC" id="6.3.4.4" evidence="1"/>
<dbReference type="EMBL" id="CP001233">
    <property type="protein sequence ID" value="ACP06819.1"/>
    <property type="molecule type" value="Genomic_DNA"/>
</dbReference>
<dbReference type="RefSeq" id="WP_000527932.1">
    <property type="nucleotide sequence ID" value="NC_012578.1"/>
</dbReference>
<dbReference type="SMR" id="C3LRR4"/>
<dbReference type="KEGG" id="vcm:VCM66_2522"/>
<dbReference type="HOGENOM" id="CLU_029848_0_0_6"/>
<dbReference type="UniPathway" id="UPA00075">
    <property type="reaction ID" value="UER00335"/>
</dbReference>
<dbReference type="Proteomes" id="UP000001217">
    <property type="component" value="Chromosome I"/>
</dbReference>
<dbReference type="GO" id="GO:0005737">
    <property type="term" value="C:cytoplasm"/>
    <property type="evidence" value="ECO:0007669"/>
    <property type="project" value="UniProtKB-SubCell"/>
</dbReference>
<dbReference type="GO" id="GO:0004019">
    <property type="term" value="F:adenylosuccinate synthase activity"/>
    <property type="evidence" value="ECO:0007669"/>
    <property type="project" value="UniProtKB-UniRule"/>
</dbReference>
<dbReference type="GO" id="GO:0005525">
    <property type="term" value="F:GTP binding"/>
    <property type="evidence" value="ECO:0007669"/>
    <property type="project" value="UniProtKB-UniRule"/>
</dbReference>
<dbReference type="GO" id="GO:0000287">
    <property type="term" value="F:magnesium ion binding"/>
    <property type="evidence" value="ECO:0007669"/>
    <property type="project" value="UniProtKB-UniRule"/>
</dbReference>
<dbReference type="GO" id="GO:0044208">
    <property type="term" value="P:'de novo' AMP biosynthetic process"/>
    <property type="evidence" value="ECO:0007669"/>
    <property type="project" value="UniProtKB-UniRule"/>
</dbReference>
<dbReference type="GO" id="GO:0046040">
    <property type="term" value="P:IMP metabolic process"/>
    <property type="evidence" value="ECO:0007669"/>
    <property type="project" value="TreeGrafter"/>
</dbReference>
<dbReference type="CDD" id="cd03108">
    <property type="entry name" value="AdSS"/>
    <property type="match status" value="1"/>
</dbReference>
<dbReference type="FunFam" id="1.10.300.10:FF:000001">
    <property type="entry name" value="Adenylosuccinate synthetase"/>
    <property type="match status" value="1"/>
</dbReference>
<dbReference type="FunFam" id="3.90.170.10:FF:000001">
    <property type="entry name" value="Adenylosuccinate synthetase"/>
    <property type="match status" value="1"/>
</dbReference>
<dbReference type="Gene3D" id="3.40.440.10">
    <property type="entry name" value="Adenylosuccinate Synthetase, subunit A, domain 1"/>
    <property type="match status" value="1"/>
</dbReference>
<dbReference type="Gene3D" id="1.10.300.10">
    <property type="entry name" value="Adenylosuccinate Synthetase, subunit A, domain 2"/>
    <property type="match status" value="1"/>
</dbReference>
<dbReference type="Gene3D" id="3.90.170.10">
    <property type="entry name" value="Adenylosuccinate Synthetase, subunit A, domain 3"/>
    <property type="match status" value="1"/>
</dbReference>
<dbReference type="HAMAP" id="MF_00011">
    <property type="entry name" value="Adenylosucc_synth"/>
    <property type="match status" value="1"/>
</dbReference>
<dbReference type="InterPro" id="IPR018220">
    <property type="entry name" value="Adenylosuccin_syn_GTP-bd"/>
</dbReference>
<dbReference type="InterPro" id="IPR033128">
    <property type="entry name" value="Adenylosuccin_syn_Lys_AS"/>
</dbReference>
<dbReference type="InterPro" id="IPR042109">
    <property type="entry name" value="Adenylosuccinate_synth_dom1"/>
</dbReference>
<dbReference type="InterPro" id="IPR042110">
    <property type="entry name" value="Adenylosuccinate_synth_dom2"/>
</dbReference>
<dbReference type="InterPro" id="IPR042111">
    <property type="entry name" value="Adenylosuccinate_synth_dom3"/>
</dbReference>
<dbReference type="InterPro" id="IPR001114">
    <property type="entry name" value="Adenylosuccinate_synthetase"/>
</dbReference>
<dbReference type="InterPro" id="IPR027417">
    <property type="entry name" value="P-loop_NTPase"/>
</dbReference>
<dbReference type="NCBIfam" id="NF002223">
    <property type="entry name" value="PRK01117.1"/>
    <property type="match status" value="1"/>
</dbReference>
<dbReference type="NCBIfam" id="TIGR00184">
    <property type="entry name" value="purA"/>
    <property type="match status" value="1"/>
</dbReference>
<dbReference type="PANTHER" id="PTHR11846">
    <property type="entry name" value="ADENYLOSUCCINATE SYNTHETASE"/>
    <property type="match status" value="1"/>
</dbReference>
<dbReference type="PANTHER" id="PTHR11846:SF0">
    <property type="entry name" value="ADENYLOSUCCINATE SYNTHETASE"/>
    <property type="match status" value="1"/>
</dbReference>
<dbReference type="Pfam" id="PF00709">
    <property type="entry name" value="Adenylsucc_synt"/>
    <property type="match status" value="1"/>
</dbReference>
<dbReference type="SMART" id="SM00788">
    <property type="entry name" value="Adenylsucc_synt"/>
    <property type="match status" value="1"/>
</dbReference>
<dbReference type="SUPFAM" id="SSF52540">
    <property type="entry name" value="P-loop containing nucleoside triphosphate hydrolases"/>
    <property type="match status" value="1"/>
</dbReference>
<dbReference type="PROSITE" id="PS01266">
    <property type="entry name" value="ADENYLOSUCCIN_SYN_1"/>
    <property type="match status" value="1"/>
</dbReference>
<dbReference type="PROSITE" id="PS00513">
    <property type="entry name" value="ADENYLOSUCCIN_SYN_2"/>
    <property type="match status" value="1"/>
</dbReference>
<feature type="chain" id="PRO_1000116491" description="Adenylosuccinate synthetase">
    <location>
        <begin position="1"/>
        <end position="432"/>
    </location>
</feature>
<feature type="active site" description="Proton acceptor" evidence="1">
    <location>
        <position position="14"/>
    </location>
</feature>
<feature type="active site" description="Proton donor" evidence="1">
    <location>
        <position position="42"/>
    </location>
</feature>
<feature type="binding site" evidence="1">
    <location>
        <begin position="13"/>
        <end position="19"/>
    </location>
    <ligand>
        <name>GTP</name>
        <dbReference type="ChEBI" id="CHEBI:37565"/>
    </ligand>
</feature>
<feature type="binding site" description="in other chain" evidence="1">
    <location>
        <begin position="14"/>
        <end position="17"/>
    </location>
    <ligand>
        <name>IMP</name>
        <dbReference type="ChEBI" id="CHEBI:58053"/>
        <note>ligand shared between dimeric partners</note>
    </ligand>
</feature>
<feature type="binding site" evidence="1">
    <location>
        <position position="14"/>
    </location>
    <ligand>
        <name>Mg(2+)</name>
        <dbReference type="ChEBI" id="CHEBI:18420"/>
    </ligand>
</feature>
<feature type="binding site" description="in other chain" evidence="1">
    <location>
        <begin position="39"/>
        <end position="42"/>
    </location>
    <ligand>
        <name>IMP</name>
        <dbReference type="ChEBI" id="CHEBI:58053"/>
        <note>ligand shared between dimeric partners</note>
    </ligand>
</feature>
<feature type="binding site" evidence="1">
    <location>
        <begin position="41"/>
        <end position="43"/>
    </location>
    <ligand>
        <name>GTP</name>
        <dbReference type="ChEBI" id="CHEBI:37565"/>
    </ligand>
</feature>
<feature type="binding site" evidence="1">
    <location>
        <position position="41"/>
    </location>
    <ligand>
        <name>Mg(2+)</name>
        <dbReference type="ChEBI" id="CHEBI:18420"/>
    </ligand>
</feature>
<feature type="binding site" description="in other chain" evidence="1">
    <location>
        <position position="130"/>
    </location>
    <ligand>
        <name>IMP</name>
        <dbReference type="ChEBI" id="CHEBI:58053"/>
        <note>ligand shared between dimeric partners</note>
    </ligand>
</feature>
<feature type="binding site" evidence="1">
    <location>
        <position position="144"/>
    </location>
    <ligand>
        <name>IMP</name>
        <dbReference type="ChEBI" id="CHEBI:58053"/>
        <note>ligand shared between dimeric partners</note>
    </ligand>
</feature>
<feature type="binding site" description="in other chain" evidence="1">
    <location>
        <position position="225"/>
    </location>
    <ligand>
        <name>IMP</name>
        <dbReference type="ChEBI" id="CHEBI:58053"/>
        <note>ligand shared between dimeric partners</note>
    </ligand>
</feature>
<feature type="binding site" description="in other chain" evidence="1">
    <location>
        <position position="240"/>
    </location>
    <ligand>
        <name>IMP</name>
        <dbReference type="ChEBI" id="CHEBI:58053"/>
        <note>ligand shared between dimeric partners</note>
    </ligand>
</feature>
<feature type="binding site" evidence="1">
    <location>
        <begin position="300"/>
        <end position="306"/>
    </location>
    <ligand>
        <name>substrate</name>
    </ligand>
</feature>
<feature type="binding site" description="in other chain" evidence="1">
    <location>
        <position position="304"/>
    </location>
    <ligand>
        <name>IMP</name>
        <dbReference type="ChEBI" id="CHEBI:58053"/>
        <note>ligand shared between dimeric partners</note>
    </ligand>
</feature>
<feature type="binding site" evidence="1">
    <location>
        <position position="306"/>
    </location>
    <ligand>
        <name>GTP</name>
        <dbReference type="ChEBI" id="CHEBI:37565"/>
    </ligand>
</feature>
<feature type="binding site" evidence="1">
    <location>
        <begin position="332"/>
        <end position="334"/>
    </location>
    <ligand>
        <name>GTP</name>
        <dbReference type="ChEBI" id="CHEBI:37565"/>
    </ligand>
</feature>
<feature type="binding site" evidence="1">
    <location>
        <begin position="415"/>
        <end position="417"/>
    </location>
    <ligand>
        <name>GTP</name>
        <dbReference type="ChEBI" id="CHEBI:37565"/>
    </ligand>
</feature>
<protein>
    <recommendedName>
        <fullName evidence="1">Adenylosuccinate synthetase</fullName>
        <shortName evidence="1">AMPSase</shortName>
        <shortName evidence="1">AdSS</shortName>
        <ecNumber evidence="1">6.3.4.4</ecNumber>
    </recommendedName>
    <alternativeName>
        <fullName evidence="1">IMP--aspartate ligase</fullName>
    </alternativeName>
</protein>
<reference key="1">
    <citation type="journal article" date="2008" name="PLoS ONE">
        <title>A recalibrated molecular clock and independent origins for the cholera pandemic clones.</title>
        <authorList>
            <person name="Feng L."/>
            <person name="Reeves P.R."/>
            <person name="Lan R."/>
            <person name="Ren Y."/>
            <person name="Gao C."/>
            <person name="Zhou Z."/>
            <person name="Ren Y."/>
            <person name="Cheng J."/>
            <person name="Wang W."/>
            <person name="Wang J."/>
            <person name="Qian W."/>
            <person name="Li D."/>
            <person name="Wang L."/>
        </authorList>
    </citation>
    <scope>NUCLEOTIDE SEQUENCE [LARGE SCALE GENOMIC DNA]</scope>
    <source>
        <strain>M66-2</strain>
    </source>
</reference>
<gene>
    <name evidence="1" type="primary">purA</name>
    <name type="ordered locus">VCM66_2522</name>
</gene>
<accession>C3LRR4</accession>
<organism>
    <name type="scientific">Vibrio cholerae serotype O1 (strain M66-2)</name>
    <dbReference type="NCBI Taxonomy" id="579112"/>
    <lineage>
        <taxon>Bacteria</taxon>
        <taxon>Pseudomonadati</taxon>
        <taxon>Pseudomonadota</taxon>
        <taxon>Gammaproteobacteria</taxon>
        <taxon>Vibrionales</taxon>
        <taxon>Vibrionaceae</taxon>
        <taxon>Vibrio</taxon>
    </lineage>
</organism>
<name>PURA_VIBCM</name>
<proteinExistence type="inferred from homology"/>